<protein>
    <recommendedName>
        <fullName evidence="1">Probable transcriptional regulatory protein Cla_1081</fullName>
    </recommendedName>
</protein>
<reference key="1">
    <citation type="journal article" date="2008" name="Foodborne Pathog. Dis.">
        <title>The complete genome sequence and analysis of the human pathogen Campylobacter lari.</title>
        <authorList>
            <person name="Miller W.G."/>
            <person name="Wang G."/>
            <person name="Binnewies T.T."/>
            <person name="Parker C.T."/>
        </authorList>
    </citation>
    <scope>NUCLEOTIDE SEQUENCE [LARGE SCALE GENOMIC DNA]</scope>
    <source>
        <strain>RM2100 / D67 / ATCC BAA-1060</strain>
    </source>
</reference>
<gene>
    <name type="ordered locus">Cla_1081</name>
</gene>
<dbReference type="EMBL" id="CP000932">
    <property type="protein sequence ID" value="ACM64403.1"/>
    <property type="molecule type" value="Genomic_DNA"/>
</dbReference>
<dbReference type="RefSeq" id="WP_012661786.1">
    <property type="nucleotide sequence ID" value="NC_012039.1"/>
</dbReference>
<dbReference type="SMR" id="B9KCW4"/>
<dbReference type="STRING" id="306263.Cla_1081"/>
<dbReference type="KEGG" id="cla:CLA_1081"/>
<dbReference type="PATRIC" id="fig|306263.5.peg.1066"/>
<dbReference type="eggNOG" id="COG0217">
    <property type="taxonomic scope" value="Bacteria"/>
</dbReference>
<dbReference type="HOGENOM" id="CLU_062974_2_2_7"/>
<dbReference type="Proteomes" id="UP000007727">
    <property type="component" value="Chromosome"/>
</dbReference>
<dbReference type="GO" id="GO:0005829">
    <property type="term" value="C:cytosol"/>
    <property type="evidence" value="ECO:0007669"/>
    <property type="project" value="TreeGrafter"/>
</dbReference>
<dbReference type="GO" id="GO:0003677">
    <property type="term" value="F:DNA binding"/>
    <property type="evidence" value="ECO:0007669"/>
    <property type="project" value="UniProtKB-UniRule"/>
</dbReference>
<dbReference type="GO" id="GO:0006355">
    <property type="term" value="P:regulation of DNA-templated transcription"/>
    <property type="evidence" value="ECO:0007669"/>
    <property type="project" value="UniProtKB-UniRule"/>
</dbReference>
<dbReference type="FunFam" id="1.10.10.200:FF:000004">
    <property type="entry name" value="Probable transcriptional regulatory protein BSBG_02618"/>
    <property type="match status" value="1"/>
</dbReference>
<dbReference type="Gene3D" id="1.10.10.200">
    <property type="match status" value="1"/>
</dbReference>
<dbReference type="Gene3D" id="3.30.70.980">
    <property type="match status" value="2"/>
</dbReference>
<dbReference type="HAMAP" id="MF_00693">
    <property type="entry name" value="Transcrip_reg_TACO1"/>
    <property type="match status" value="1"/>
</dbReference>
<dbReference type="InterPro" id="IPR017856">
    <property type="entry name" value="Integrase-like_N"/>
</dbReference>
<dbReference type="InterPro" id="IPR048300">
    <property type="entry name" value="TACO1_YebC-like_2nd/3rd_dom"/>
</dbReference>
<dbReference type="InterPro" id="IPR049083">
    <property type="entry name" value="TACO1_YebC_N"/>
</dbReference>
<dbReference type="InterPro" id="IPR002876">
    <property type="entry name" value="Transcrip_reg_TACO1-like"/>
</dbReference>
<dbReference type="InterPro" id="IPR026564">
    <property type="entry name" value="Transcrip_reg_TACO1-like_dom3"/>
</dbReference>
<dbReference type="InterPro" id="IPR029072">
    <property type="entry name" value="YebC-like"/>
</dbReference>
<dbReference type="NCBIfam" id="NF009044">
    <property type="entry name" value="PRK12378.1"/>
    <property type="match status" value="1"/>
</dbReference>
<dbReference type="NCBIfam" id="TIGR01033">
    <property type="entry name" value="YebC/PmpR family DNA-binding transcriptional regulator"/>
    <property type="match status" value="1"/>
</dbReference>
<dbReference type="PANTHER" id="PTHR12532:SF6">
    <property type="entry name" value="TRANSCRIPTIONAL REGULATORY PROTEIN YEBC-RELATED"/>
    <property type="match status" value="1"/>
</dbReference>
<dbReference type="PANTHER" id="PTHR12532">
    <property type="entry name" value="TRANSLATIONAL ACTIVATOR OF CYTOCHROME C OXIDASE 1"/>
    <property type="match status" value="1"/>
</dbReference>
<dbReference type="Pfam" id="PF20772">
    <property type="entry name" value="TACO1_YebC_N"/>
    <property type="match status" value="1"/>
</dbReference>
<dbReference type="Pfam" id="PF01709">
    <property type="entry name" value="Transcrip_reg"/>
    <property type="match status" value="1"/>
</dbReference>
<dbReference type="SUPFAM" id="SSF75625">
    <property type="entry name" value="YebC-like"/>
    <property type="match status" value="1"/>
</dbReference>
<sequence>MGRAFEYRRASKEARWDKMSKLFPKLAKAIQVAAKEGGADPDMNPKLRSAIATAKANNMPKDNIDAAIKRASGKDSADIKNIHYEGKAAHGALIIVECMSDNPTRTVANVKAIFSKNGGEILQNGSLTFMFSHKAVFHLEKYNGDLEELELDLIDAGLEELDQDDEELRIIGDYTAFGELSNAIEKKALVLKKAGLEYLANNPVSFSEEQLLDIEKLLDKLEDDDDVQAVYTNIE</sequence>
<accession>B9KCW4</accession>
<proteinExistence type="inferred from homology"/>
<organism>
    <name type="scientific">Campylobacter lari (strain RM2100 / D67 / ATCC BAA-1060)</name>
    <dbReference type="NCBI Taxonomy" id="306263"/>
    <lineage>
        <taxon>Bacteria</taxon>
        <taxon>Pseudomonadati</taxon>
        <taxon>Campylobacterota</taxon>
        <taxon>Epsilonproteobacteria</taxon>
        <taxon>Campylobacterales</taxon>
        <taxon>Campylobacteraceae</taxon>
        <taxon>Campylobacter</taxon>
    </lineage>
</organism>
<comment type="subcellular location">
    <subcellularLocation>
        <location evidence="1">Cytoplasm</location>
    </subcellularLocation>
</comment>
<comment type="similarity">
    <text evidence="1">Belongs to the TACO1 family.</text>
</comment>
<keyword id="KW-0963">Cytoplasm</keyword>
<keyword id="KW-0238">DNA-binding</keyword>
<keyword id="KW-1185">Reference proteome</keyword>
<keyword id="KW-0804">Transcription</keyword>
<keyword id="KW-0805">Transcription regulation</keyword>
<feature type="chain" id="PRO_1000200084" description="Probable transcriptional regulatory protein Cla_1081">
    <location>
        <begin position="1"/>
        <end position="235"/>
    </location>
</feature>
<evidence type="ECO:0000255" key="1">
    <source>
        <dbReference type="HAMAP-Rule" id="MF_00693"/>
    </source>
</evidence>
<name>Y1081_CAMLR</name>